<feature type="chain" id="PRO_0000056162" description="Protein SAN1">
    <location>
        <begin position="1"/>
        <end position="610"/>
    </location>
</feature>
<feature type="zinc finger region" description="RING-type" evidence="1">
    <location>
        <begin position="240"/>
        <end position="280"/>
    </location>
</feature>
<feature type="region of interest" description="Disordered" evidence="2">
    <location>
        <begin position="1"/>
        <end position="36"/>
    </location>
</feature>
<feature type="region of interest" description="Disordered" evidence="2">
    <location>
        <begin position="176"/>
        <end position="231"/>
    </location>
</feature>
<feature type="region of interest" description="Disordered" evidence="2">
    <location>
        <begin position="318"/>
        <end position="348"/>
    </location>
</feature>
<feature type="region of interest" description="Disordered" evidence="2">
    <location>
        <begin position="360"/>
        <end position="453"/>
    </location>
</feature>
<feature type="region of interest" description="Disordered" evidence="2">
    <location>
        <begin position="471"/>
        <end position="502"/>
    </location>
</feature>
<feature type="region of interest" description="Disordered" evidence="2">
    <location>
        <begin position="514"/>
        <end position="554"/>
    </location>
</feature>
<feature type="region of interest" description="Disordered" evidence="2">
    <location>
        <begin position="569"/>
        <end position="610"/>
    </location>
</feature>
<feature type="compositionally biased region" description="Polar residues" evidence="2">
    <location>
        <begin position="1"/>
        <end position="10"/>
    </location>
</feature>
<feature type="compositionally biased region" description="Low complexity" evidence="2">
    <location>
        <begin position="11"/>
        <end position="36"/>
    </location>
</feature>
<feature type="compositionally biased region" description="Basic and acidic residues" evidence="2">
    <location>
        <begin position="194"/>
        <end position="203"/>
    </location>
</feature>
<feature type="compositionally biased region" description="Polar residues" evidence="2">
    <location>
        <begin position="210"/>
        <end position="223"/>
    </location>
</feature>
<feature type="compositionally biased region" description="Polar residues" evidence="2">
    <location>
        <begin position="319"/>
        <end position="348"/>
    </location>
</feature>
<feature type="compositionally biased region" description="Low complexity" evidence="2">
    <location>
        <begin position="384"/>
        <end position="406"/>
    </location>
</feature>
<feature type="compositionally biased region" description="Low complexity" evidence="2">
    <location>
        <begin position="425"/>
        <end position="447"/>
    </location>
</feature>
<feature type="compositionally biased region" description="Polar residues" evidence="2">
    <location>
        <begin position="471"/>
        <end position="492"/>
    </location>
</feature>
<feature type="compositionally biased region" description="Low complexity" evidence="2">
    <location>
        <begin position="493"/>
        <end position="502"/>
    </location>
</feature>
<feature type="compositionally biased region" description="Polar residues" evidence="2">
    <location>
        <begin position="533"/>
        <end position="554"/>
    </location>
</feature>
<feature type="compositionally biased region" description="Polar residues" evidence="2">
    <location>
        <begin position="592"/>
        <end position="610"/>
    </location>
</feature>
<evidence type="ECO:0000255" key="1">
    <source>
        <dbReference type="PROSITE-ProRule" id="PRU00175"/>
    </source>
</evidence>
<evidence type="ECO:0000256" key="2">
    <source>
        <dbReference type="SAM" id="MobiDB-lite"/>
    </source>
</evidence>
<evidence type="ECO:0000269" key="3">
    <source>
    </source>
</evidence>
<organism>
    <name type="scientific">Saccharomyces cerevisiae (strain ATCC 204508 / S288c)</name>
    <name type="common">Baker's yeast</name>
    <dbReference type="NCBI Taxonomy" id="559292"/>
    <lineage>
        <taxon>Eukaryota</taxon>
        <taxon>Fungi</taxon>
        <taxon>Dikarya</taxon>
        <taxon>Ascomycota</taxon>
        <taxon>Saccharomycotina</taxon>
        <taxon>Saccharomycetes</taxon>
        <taxon>Saccharomycetales</taxon>
        <taxon>Saccharomycetaceae</taxon>
        <taxon>Saccharomyces</taxon>
    </lineage>
</organism>
<protein>
    <recommendedName>
        <fullName>Protein SAN1</fullName>
    </recommendedName>
</protein>
<reference key="1">
    <citation type="journal article" date="1989" name="Genetics">
        <title>Genetic and molecular characterization of suppressors of SIR4 mutations in Saccharomyces cerevisiae.</title>
        <authorList>
            <person name="Schnell R."/>
            <person name="D'Ari L."/>
            <person name="Foss M."/>
            <person name="Goodman D."/>
            <person name="Rine J."/>
        </authorList>
    </citation>
    <scope>NUCLEOTIDE SEQUENCE [GENOMIC DNA]</scope>
</reference>
<reference key="2">
    <citation type="journal article" date="1997" name="Nature">
        <title>The nucleotide sequence of Saccharomyces cerevisiae chromosome IV.</title>
        <authorList>
            <person name="Jacq C."/>
            <person name="Alt-Moerbe J."/>
            <person name="Andre B."/>
            <person name="Arnold W."/>
            <person name="Bahr A."/>
            <person name="Ballesta J.P.G."/>
            <person name="Bargues M."/>
            <person name="Baron L."/>
            <person name="Becker A."/>
            <person name="Biteau N."/>
            <person name="Bloecker H."/>
            <person name="Blugeon C."/>
            <person name="Boskovic J."/>
            <person name="Brandt P."/>
            <person name="Brueckner M."/>
            <person name="Buitrago M.J."/>
            <person name="Coster F."/>
            <person name="Delaveau T."/>
            <person name="del Rey F."/>
            <person name="Dujon B."/>
            <person name="Eide L.G."/>
            <person name="Garcia-Cantalejo J.M."/>
            <person name="Goffeau A."/>
            <person name="Gomez-Peris A."/>
            <person name="Granotier C."/>
            <person name="Hanemann V."/>
            <person name="Hankeln T."/>
            <person name="Hoheisel J.D."/>
            <person name="Jaeger W."/>
            <person name="Jimenez A."/>
            <person name="Jonniaux J.-L."/>
            <person name="Kraemer C."/>
            <person name="Kuester H."/>
            <person name="Laamanen P."/>
            <person name="Legros Y."/>
            <person name="Louis E.J."/>
            <person name="Moeller-Rieker S."/>
            <person name="Monnet A."/>
            <person name="Moro M."/>
            <person name="Mueller-Auer S."/>
            <person name="Nussbaumer B."/>
            <person name="Paricio N."/>
            <person name="Paulin L."/>
            <person name="Perea J."/>
            <person name="Perez-Alonso M."/>
            <person name="Perez-Ortin J.E."/>
            <person name="Pohl T.M."/>
            <person name="Prydz H."/>
            <person name="Purnelle B."/>
            <person name="Rasmussen S.W."/>
            <person name="Remacha M.A."/>
            <person name="Revuelta J.L."/>
            <person name="Rieger M."/>
            <person name="Salom D."/>
            <person name="Saluz H.P."/>
            <person name="Saiz J.E."/>
            <person name="Saren A.-M."/>
            <person name="Schaefer M."/>
            <person name="Scharfe M."/>
            <person name="Schmidt E.R."/>
            <person name="Schneider C."/>
            <person name="Scholler P."/>
            <person name="Schwarz S."/>
            <person name="Soler-Mira A."/>
            <person name="Urrestarazu L.A."/>
            <person name="Verhasselt P."/>
            <person name="Vissers S."/>
            <person name="Voet M."/>
            <person name="Volckaert G."/>
            <person name="Wagner G."/>
            <person name="Wambutt R."/>
            <person name="Wedler E."/>
            <person name="Wedler H."/>
            <person name="Woelfl S."/>
            <person name="Harris D.E."/>
            <person name="Bowman S."/>
            <person name="Brown D."/>
            <person name="Churcher C.M."/>
            <person name="Connor R."/>
            <person name="Dedman K."/>
            <person name="Gentles S."/>
            <person name="Hamlin N."/>
            <person name="Hunt S."/>
            <person name="Jones L."/>
            <person name="McDonald S."/>
            <person name="Murphy L.D."/>
            <person name="Niblett D."/>
            <person name="Odell C."/>
            <person name="Oliver K."/>
            <person name="Rajandream M.A."/>
            <person name="Richards C."/>
            <person name="Shore L."/>
            <person name="Walsh S.V."/>
            <person name="Barrell B.G."/>
            <person name="Dietrich F.S."/>
            <person name="Mulligan J.T."/>
            <person name="Allen E."/>
            <person name="Araujo R."/>
            <person name="Aviles E."/>
            <person name="Berno A."/>
            <person name="Carpenter J."/>
            <person name="Chen E."/>
            <person name="Cherry J.M."/>
            <person name="Chung E."/>
            <person name="Duncan M."/>
            <person name="Hunicke-Smith S."/>
            <person name="Hyman R.W."/>
            <person name="Komp C."/>
            <person name="Lashkari D."/>
            <person name="Lew H."/>
            <person name="Lin D."/>
            <person name="Mosedale D."/>
            <person name="Nakahara K."/>
            <person name="Namath A."/>
            <person name="Oefner P."/>
            <person name="Oh C."/>
            <person name="Petel F.X."/>
            <person name="Roberts D."/>
            <person name="Schramm S."/>
            <person name="Schroeder M."/>
            <person name="Shogren T."/>
            <person name="Shroff N."/>
            <person name="Winant A."/>
            <person name="Yelton M.A."/>
            <person name="Botstein D."/>
            <person name="Davis R.W."/>
            <person name="Johnston M."/>
            <person name="Andrews S."/>
            <person name="Brinkman R."/>
            <person name="Cooper J."/>
            <person name="Ding H."/>
            <person name="Du Z."/>
            <person name="Favello A."/>
            <person name="Fulton L."/>
            <person name="Gattung S."/>
            <person name="Greco T."/>
            <person name="Hallsworth K."/>
            <person name="Hawkins J."/>
            <person name="Hillier L.W."/>
            <person name="Jier M."/>
            <person name="Johnson D."/>
            <person name="Johnston L."/>
            <person name="Kirsten J."/>
            <person name="Kucaba T."/>
            <person name="Langston Y."/>
            <person name="Latreille P."/>
            <person name="Le T."/>
            <person name="Mardis E."/>
            <person name="Menezes S."/>
            <person name="Miller N."/>
            <person name="Nhan M."/>
            <person name="Pauley A."/>
            <person name="Peluso D."/>
            <person name="Rifkin L."/>
            <person name="Riles L."/>
            <person name="Taich A."/>
            <person name="Trevaskis E."/>
            <person name="Vignati D."/>
            <person name="Wilcox L."/>
            <person name="Wohldman P."/>
            <person name="Vaudin M."/>
            <person name="Wilson R."/>
            <person name="Waterston R."/>
            <person name="Albermann K."/>
            <person name="Hani J."/>
            <person name="Heumann K."/>
            <person name="Kleine K."/>
            <person name="Mewes H.-W."/>
            <person name="Zollner A."/>
            <person name="Zaccaria P."/>
        </authorList>
    </citation>
    <scope>NUCLEOTIDE SEQUENCE [LARGE SCALE GENOMIC DNA]</scope>
    <source>
        <strain>ATCC 204508 / S288c</strain>
    </source>
</reference>
<reference key="3">
    <citation type="journal article" date="2014" name="G3 (Bethesda)">
        <title>The reference genome sequence of Saccharomyces cerevisiae: Then and now.</title>
        <authorList>
            <person name="Engel S.R."/>
            <person name="Dietrich F.S."/>
            <person name="Fisk D.G."/>
            <person name="Binkley G."/>
            <person name="Balakrishnan R."/>
            <person name="Costanzo M.C."/>
            <person name="Dwight S.S."/>
            <person name="Hitz B.C."/>
            <person name="Karra K."/>
            <person name="Nash R.S."/>
            <person name="Weng S."/>
            <person name="Wong E.D."/>
            <person name="Lloyd P."/>
            <person name="Skrzypek M.S."/>
            <person name="Miyasato S.R."/>
            <person name="Simison M."/>
            <person name="Cherry J.M."/>
        </authorList>
    </citation>
    <scope>GENOME REANNOTATION</scope>
    <source>
        <strain>ATCC 204508 / S288c</strain>
    </source>
</reference>
<reference key="4">
    <citation type="journal article" date="2003" name="Nature">
        <title>Global analysis of protein expression in yeast.</title>
        <authorList>
            <person name="Ghaemmaghami S."/>
            <person name="Huh W.-K."/>
            <person name="Bower K."/>
            <person name="Howson R.W."/>
            <person name="Belle A."/>
            <person name="Dephoure N."/>
            <person name="O'Shea E.K."/>
            <person name="Weissman J.S."/>
        </authorList>
    </citation>
    <scope>LEVEL OF PROTEIN EXPRESSION [LARGE SCALE ANALYSIS]</scope>
</reference>
<reference key="5">
    <citation type="journal article" date="2009" name="Science">
        <title>Global analysis of Cdk1 substrate phosphorylation sites provides insights into evolution.</title>
        <authorList>
            <person name="Holt L.J."/>
            <person name="Tuch B.B."/>
            <person name="Villen J."/>
            <person name="Johnson A.D."/>
            <person name="Gygi S.P."/>
            <person name="Morgan D.O."/>
        </authorList>
    </citation>
    <scope>IDENTIFICATION BY MASS SPECTROMETRY [LARGE SCALE ANALYSIS]</scope>
</reference>
<reference key="6">
    <citation type="journal article" date="2012" name="Proteomics">
        <title>Sites of ubiquitin attachment in Saccharomyces cerevisiae.</title>
        <authorList>
            <person name="Starita L.M."/>
            <person name="Lo R.S."/>
            <person name="Eng J.K."/>
            <person name="von Haller P.D."/>
            <person name="Fields S."/>
        </authorList>
    </citation>
    <scope>IDENTIFICATION BY MASS SPECTROMETRY [LARGE SCALE ANALYSIS]</scope>
</reference>
<comment type="function">
    <text>Plays a specific role in mating-type regulation of yeast, by acting post-translationally to control the stability or activity of the SIR4 proteins.</text>
</comment>
<comment type="miscellaneous">
    <text evidence="3">Present with 172 molecules/cell in log phase SD medium.</text>
</comment>
<gene>
    <name type="primary">SAN1</name>
    <name type="ordered locus">YDR143C</name>
    <name type="ORF">YD2943.02C</name>
</gene>
<accession>P22470</accession>
<accession>D6VSC6</accession>
<keyword id="KW-0479">Metal-binding</keyword>
<keyword id="KW-1185">Reference proteome</keyword>
<keyword id="KW-0862">Zinc</keyword>
<keyword id="KW-0863">Zinc-finger</keyword>
<proteinExistence type="evidence at protein level"/>
<sequence length="610" mass="65618">MSESGQEQNRGTNTSPNNAENNNNSNAASGPLNGGAEQTRNITVSIQYSYFTPERLAHLSNISNNDNNENNSAASGSTIANGTGPSFGIGNGGHQPDGALVLSFRDVPASTPQDRLNSFISVAAQLAMERFNRLLNRPKGISKDEFDKLPVLQVSDLPKAEGPLCSICYDEYEDEVDSTKAKRKRDSENEEESEGTKKRKDNEGAPLRTTADNDSNPSITNATVVEPPSIPLTEQQRTLNDEETNPSYKHSPIKLPCGHIFGRECIYKWSRLENSCPLCRQKISESVGVQRAAQQDTDEVAANEAAFERIRRVLYDPTAVNSTNENSSAPSENTSNTTVPTIGNASSGEQMLSRTGFFLVPQNGQPLHNPVRLPPNDSDRNGVNGPSSTTQNPPSNSGGSNNNQSPRWVPIPLTLFQFHSPNPNPSASDSSASPSAANGPNSNNTSSDATDPHHNRLRAVLDHIFNVAQRGTSDTSATTAPGAQTVHNQGRNDSSSSDTTQGSSFLENISRLTGHFTNGSRDNNNDNNHSNDQQRGGSTGENNRNNLFSSGVASYRNQNGDVTTVELRNNNSAAFPPTDENPSQGQGSSSSDTTIHNDVPNDNNEQRSSQ</sequence>
<name>SAN1_YEAST</name>
<dbReference type="EMBL" id="X90585">
    <property type="protein sequence ID" value="CAA62213.1"/>
    <property type="molecule type" value="Genomic_DNA"/>
</dbReference>
<dbReference type="EMBL" id="Z54139">
    <property type="protein sequence ID" value="CAA90812.1"/>
    <property type="molecule type" value="Genomic_DNA"/>
</dbReference>
<dbReference type="EMBL" id="BK006938">
    <property type="protein sequence ID" value="DAA11986.1"/>
    <property type="molecule type" value="Genomic_DNA"/>
</dbReference>
<dbReference type="PIR" id="S05807">
    <property type="entry name" value="S05807"/>
</dbReference>
<dbReference type="RefSeq" id="NP_010427.3">
    <property type="nucleotide sequence ID" value="NM_001180450.3"/>
</dbReference>
<dbReference type="SMR" id="P22470"/>
<dbReference type="BioGRID" id="32197">
    <property type="interactions" value="213"/>
</dbReference>
<dbReference type="DIP" id="DIP-6517N"/>
<dbReference type="FunCoup" id="P22470">
    <property type="interactions" value="255"/>
</dbReference>
<dbReference type="IntAct" id="P22470">
    <property type="interactions" value="26"/>
</dbReference>
<dbReference type="MINT" id="P22470"/>
<dbReference type="STRING" id="4932.YDR143C"/>
<dbReference type="TCDB" id="3.A.16.1.6">
    <property type="family name" value="the endoplasmic reticular retrotranslocon (er-rt) family"/>
</dbReference>
<dbReference type="CarbonylDB" id="P22470"/>
<dbReference type="GlyGen" id="P22470">
    <property type="glycosylation" value="1 site, 1 O-linked glycan (1 site)"/>
</dbReference>
<dbReference type="iPTMnet" id="P22470"/>
<dbReference type="PaxDb" id="4932-YDR143C"/>
<dbReference type="PeptideAtlas" id="P22470"/>
<dbReference type="EnsemblFungi" id="YDR143C_mRNA">
    <property type="protein sequence ID" value="YDR143C"/>
    <property type="gene ID" value="YDR143C"/>
</dbReference>
<dbReference type="GeneID" id="851721"/>
<dbReference type="KEGG" id="sce:YDR143C"/>
<dbReference type="AGR" id="SGD:S000002550"/>
<dbReference type="SGD" id="S000002550">
    <property type="gene designation" value="SAN1"/>
</dbReference>
<dbReference type="VEuPathDB" id="FungiDB:YDR143C"/>
<dbReference type="eggNOG" id="KOG0802">
    <property type="taxonomic scope" value="Eukaryota"/>
</dbReference>
<dbReference type="HOGENOM" id="CLU_020039_0_0_1"/>
<dbReference type="InParanoid" id="P22470"/>
<dbReference type="OMA" id="HIFGREC"/>
<dbReference type="OrthoDB" id="8062037at2759"/>
<dbReference type="BioCyc" id="YEAST:G3O-29740-MONOMER"/>
<dbReference type="BioGRID-ORCS" id="851721">
    <property type="hits" value="5 hits in 10 CRISPR screens"/>
</dbReference>
<dbReference type="PRO" id="PR:P22470"/>
<dbReference type="Proteomes" id="UP000002311">
    <property type="component" value="Chromosome IV"/>
</dbReference>
<dbReference type="RNAct" id="P22470">
    <property type="molecule type" value="protein"/>
</dbReference>
<dbReference type="GO" id="GO:0005737">
    <property type="term" value="C:cytoplasm"/>
    <property type="evidence" value="ECO:0000315"/>
    <property type="project" value="SGD"/>
</dbReference>
<dbReference type="GO" id="GO:0005634">
    <property type="term" value="C:nucleus"/>
    <property type="evidence" value="ECO:0000314"/>
    <property type="project" value="SGD"/>
</dbReference>
<dbReference type="GO" id="GO:0005777">
    <property type="term" value="C:peroxisome"/>
    <property type="evidence" value="ECO:0007005"/>
    <property type="project" value="SGD"/>
</dbReference>
<dbReference type="GO" id="GO:0031249">
    <property type="term" value="F:denatured protein binding"/>
    <property type="evidence" value="ECO:0000353"/>
    <property type="project" value="DisProt"/>
</dbReference>
<dbReference type="GO" id="GO:0061630">
    <property type="term" value="F:ubiquitin protein ligase activity"/>
    <property type="evidence" value="ECO:0000318"/>
    <property type="project" value="GO_Central"/>
</dbReference>
<dbReference type="GO" id="GO:0004842">
    <property type="term" value="F:ubiquitin-protein transferase activity"/>
    <property type="evidence" value="ECO:0000314"/>
    <property type="project" value="SGD"/>
</dbReference>
<dbReference type="GO" id="GO:0008270">
    <property type="term" value="F:zinc ion binding"/>
    <property type="evidence" value="ECO:0007669"/>
    <property type="project" value="UniProtKB-KW"/>
</dbReference>
<dbReference type="GO" id="GO:0071630">
    <property type="term" value="P:nuclear protein quality control by the ubiquitin-proteasome system"/>
    <property type="evidence" value="ECO:0000315"/>
    <property type="project" value="SGD"/>
</dbReference>
<dbReference type="GO" id="GO:1903052">
    <property type="term" value="P:positive regulation of proteolysis involved in protein catabolic process"/>
    <property type="evidence" value="ECO:0000270"/>
    <property type="project" value="DisProt"/>
</dbReference>
<dbReference type="GO" id="GO:0051788">
    <property type="term" value="P:response to misfolded protein"/>
    <property type="evidence" value="ECO:0000315"/>
    <property type="project" value="SGD"/>
</dbReference>
<dbReference type="GO" id="GO:0006511">
    <property type="term" value="P:ubiquitin-dependent protein catabolic process"/>
    <property type="evidence" value="ECO:0000314"/>
    <property type="project" value="SGD"/>
</dbReference>
<dbReference type="DisProt" id="DP01136"/>
<dbReference type="Gene3D" id="3.30.40.10">
    <property type="entry name" value="Zinc/RING finger domain, C3HC4 (zinc finger)"/>
    <property type="match status" value="1"/>
</dbReference>
<dbReference type="InterPro" id="IPR001841">
    <property type="entry name" value="Znf_RING"/>
</dbReference>
<dbReference type="InterPro" id="IPR013083">
    <property type="entry name" value="Znf_RING/FYVE/PHD"/>
</dbReference>
<dbReference type="PANTHER" id="PTHR15710">
    <property type="entry name" value="E3 UBIQUITIN-PROTEIN LIGASE PRAJA"/>
    <property type="match status" value="1"/>
</dbReference>
<dbReference type="Pfam" id="PF13639">
    <property type="entry name" value="zf-RING_2"/>
    <property type="match status" value="1"/>
</dbReference>
<dbReference type="SMART" id="SM00184">
    <property type="entry name" value="RING"/>
    <property type="match status" value="1"/>
</dbReference>
<dbReference type="SUPFAM" id="SSF57850">
    <property type="entry name" value="RING/U-box"/>
    <property type="match status" value="1"/>
</dbReference>
<dbReference type="PROSITE" id="PS50089">
    <property type="entry name" value="ZF_RING_2"/>
    <property type="match status" value="1"/>
</dbReference>